<organism>
    <name type="scientific">Danio rerio</name>
    <name type="common">Zebrafish</name>
    <name type="synonym">Brachydanio rerio</name>
    <dbReference type="NCBI Taxonomy" id="7955"/>
    <lineage>
        <taxon>Eukaryota</taxon>
        <taxon>Metazoa</taxon>
        <taxon>Chordata</taxon>
        <taxon>Craniata</taxon>
        <taxon>Vertebrata</taxon>
        <taxon>Euteleostomi</taxon>
        <taxon>Actinopterygii</taxon>
        <taxon>Neopterygii</taxon>
        <taxon>Teleostei</taxon>
        <taxon>Ostariophysi</taxon>
        <taxon>Cypriniformes</taxon>
        <taxon>Danionidae</taxon>
        <taxon>Danioninae</taxon>
        <taxon>Danio</taxon>
    </lineage>
</organism>
<dbReference type="EC" id="2.3.1.225" evidence="2"/>
<dbReference type="EMBL" id="BX072537">
    <property type="status" value="NOT_ANNOTATED_CDS"/>
    <property type="molecule type" value="Genomic_DNA"/>
</dbReference>
<dbReference type="EMBL" id="BC055620">
    <property type="protein sequence ID" value="AAH55620.1"/>
    <property type="molecule type" value="mRNA"/>
</dbReference>
<dbReference type="RefSeq" id="NP_957336.2">
    <property type="nucleotide sequence ID" value="NM_201042.2"/>
</dbReference>
<dbReference type="RefSeq" id="XP_017214211.1">
    <property type="nucleotide sequence ID" value="XM_017358722.1"/>
</dbReference>
<dbReference type="FunCoup" id="B8A4F0">
    <property type="interactions" value="541"/>
</dbReference>
<dbReference type="STRING" id="7955.ENSDARP00000119367"/>
<dbReference type="PaxDb" id="7955-ENSDARP00000119367"/>
<dbReference type="Ensembl" id="ENSDART00000134630">
    <property type="protein sequence ID" value="ENSDARP00000119367"/>
    <property type="gene ID" value="ENSDARG00000007808"/>
</dbReference>
<dbReference type="GeneID" id="394017"/>
<dbReference type="KEGG" id="dre:394017"/>
<dbReference type="AGR" id="ZFIN:ZDB-GENE-040426-1621"/>
<dbReference type="CTD" id="394017"/>
<dbReference type="ZFIN" id="ZDB-GENE-040426-1621">
    <property type="gene designation" value="zdhhc16a"/>
</dbReference>
<dbReference type="eggNOG" id="KOG1313">
    <property type="taxonomic scope" value="Eukaryota"/>
</dbReference>
<dbReference type="HOGENOM" id="CLU_054274_0_0_1"/>
<dbReference type="InParanoid" id="B8A4F0"/>
<dbReference type="OMA" id="APFEDEW"/>
<dbReference type="OrthoDB" id="331948at2759"/>
<dbReference type="PhylomeDB" id="B8A4F0"/>
<dbReference type="TreeFam" id="TF320809"/>
<dbReference type="PRO" id="PR:B8A4F0"/>
<dbReference type="Proteomes" id="UP000000437">
    <property type="component" value="Chromosome 13"/>
</dbReference>
<dbReference type="Bgee" id="ENSDARG00000007808">
    <property type="expression patterns" value="Expressed in early embryo and 25 other cell types or tissues"/>
</dbReference>
<dbReference type="GO" id="GO:0005789">
    <property type="term" value="C:endoplasmic reticulum membrane"/>
    <property type="evidence" value="ECO:0007669"/>
    <property type="project" value="UniProtKB-SubCell"/>
</dbReference>
<dbReference type="GO" id="GO:0005794">
    <property type="term" value="C:Golgi apparatus"/>
    <property type="evidence" value="ECO:0000318"/>
    <property type="project" value="GO_Central"/>
</dbReference>
<dbReference type="GO" id="GO:0016409">
    <property type="term" value="F:palmitoyltransferase activity"/>
    <property type="evidence" value="ECO:0000250"/>
    <property type="project" value="UniProtKB"/>
</dbReference>
<dbReference type="GO" id="GO:0019706">
    <property type="term" value="F:protein-cysteine S-palmitoyltransferase activity"/>
    <property type="evidence" value="ECO:0007669"/>
    <property type="project" value="UniProtKB-EC"/>
</dbReference>
<dbReference type="GO" id="GO:0021898">
    <property type="term" value="P:commitment of multipotent stem cells to neuronal lineage in forebrain"/>
    <property type="evidence" value="ECO:0000315"/>
    <property type="project" value="ZFIN"/>
</dbReference>
<dbReference type="GO" id="GO:0006974">
    <property type="term" value="P:DNA damage response"/>
    <property type="evidence" value="ECO:0000250"/>
    <property type="project" value="UniProtKB"/>
</dbReference>
<dbReference type="GO" id="GO:0001654">
    <property type="term" value="P:eye development"/>
    <property type="evidence" value="ECO:0000250"/>
    <property type="project" value="UniProtKB"/>
</dbReference>
<dbReference type="GO" id="GO:0021899">
    <property type="term" value="P:fibroblast growth factor receptor signaling pathway involved in forebrain neuron fate commitment"/>
    <property type="evidence" value="ECO:0000315"/>
    <property type="project" value="ZFIN"/>
</dbReference>
<dbReference type="GO" id="GO:0007507">
    <property type="term" value="P:heart development"/>
    <property type="evidence" value="ECO:0000250"/>
    <property type="project" value="UniProtKB"/>
</dbReference>
<dbReference type="GO" id="GO:0018345">
    <property type="term" value="P:protein palmitoylation"/>
    <property type="evidence" value="ECO:0000250"/>
    <property type="project" value="UniProtKB"/>
</dbReference>
<dbReference type="GO" id="GO:0021537">
    <property type="term" value="P:telencephalon development"/>
    <property type="evidence" value="ECO:0000315"/>
    <property type="project" value="UniProtKB"/>
</dbReference>
<dbReference type="InterPro" id="IPR001594">
    <property type="entry name" value="Palmitoyltrfase_DHHC"/>
</dbReference>
<dbReference type="InterPro" id="IPR039859">
    <property type="entry name" value="PFA4/ZDH16/20/ERF2-like"/>
</dbReference>
<dbReference type="PANTHER" id="PTHR12246">
    <property type="entry name" value="PALMITOYLTRANSFERASE ZDHHC16"/>
    <property type="match status" value="1"/>
</dbReference>
<dbReference type="Pfam" id="PF01529">
    <property type="entry name" value="DHHC"/>
    <property type="match status" value="1"/>
</dbReference>
<dbReference type="PROSITE" id="PS50216">
    <property type="entry name" value="DHHC"/>
    <property type="match status" value="1"/>
</dbReference>
<protein>
    <recommendedName>
        <fullName evidence="8">Palmitoyltransferase ZDHHC16A</fullName>
        <ecNumber evidence="2">2.3.1.225</ecNumber>
    </recommendedName>
    <alternativeName>
        <fullName evidence="8">Zinc finger DHHC domain-containing protein 16A</fullName>
        <shortName evidence="8">DHHC-16A</shortName>
    </alternativeName>
</protein>
<accession>B8A4F0</accession>
<accession>Q7SXG0</accession>
<gene>
    <name evidence="9" type="primary">zdhhc16a</name>
    <name evidence="7" type="synonym">zdhhc16</name>
</gene>
<comment type="function">
    <text evidence="2 3 6">Palmitoyl acyltransferase that mediates palmitoylation of proteins and is required during embryonic heart development. Involved in the proliferation of neural stem cells by regulating the FGF/ERK pathway (By similarity). Involved in the proliferation of neural stem cells by regulating the FGF/ERK pathway (PubMed:26663717).</text>
</comment>
<comment type="catalytic activity">
    <reaction evidence="2">
        <text>L-cysteinyl-[protein] + hexadecanoyl-CoA = S-hexadecanoyl-L-cysteinyl-[protein] + CoA</text>
        <dbReference type="Rhea" id="RHEA:36683"/>
        <dbReference type="Rhea" id="RHEA-COMP:10131"/>
        <dbReference type="Rhea" id="RHEA-COMP:11032"/>
        <dbReference type="ChEBI" id="CHEBI:29950"/>
        <dbReference type="ChEBI" id="CHEBI:57287"/>
        <dbReference type="ChEBI" id="CHEBI:57379"/>
        <dbReference type="ChEBI" id="CHEBI:74151"/>
        <dbReference type="EC" id="2.3.1.225"/>
    </reaction>
</comment>
<comment type="subcellular location">
    <subcellularLocation>
        <location evidence="2">Endoplasmic reticulum membrane</location>
        <topology evidence="3">Multi-pass membrane protein</topology>
    </subcellularLocation>
</comment>
<comment type="tissue specificity">
    <text evidence="6">Expressed in the central nervous system (CNS) (PubMed:26663717). Expressed in the developing forebrain, and especially in the telencephalon (PubMed:26663717).</text>
</comment>
<comment type="developmental stage">
    <text evidence="6">Maternally expressed in the at four-cell stage. Highly expressed in the developing anterior neural plate since tailbud stage. During the segmentation period, 24 hour post fertilization (hpf), expression is still enriched in cell clusters at prosencephalon and mesencephalon.</text>
</comment>
<comment type="domain">
    <text evidence="1">The DHHC domain is required for palmitoyltransferase activity.</text>
</comment>
<comment type="disruption phenotype">
    <text evidence="6">Morpholino knockdown of the protein causes malformation in telencephalon (PubMed:26663717). Impaired neural stem/progenitor cells (NSPCs) proliferation in the telencephalon (PubMed:26663717).</text>
</comment>
<comment type="similarity">
    <text evidence="8">Belongs to the DHHC palmitoyltransferase family.</text>
</comment>
<evidence type="ECO:0000250" key="1">
    <source>
        <dbReference type="UniProtKB" id="Q8IUH5"/>
    </source>
</evidence>
<evidence type="ECO:0000250" key="2">
    <source>
        <dbReference type="UniProtKB" id="Q969W1"/>
    </source>
</evidence>
<evidence type="ECO:0000250" key="3">
    <source>
        <dbReference type="UniProtKB" id="Q9ESG8"/>
    </source>
</evidence>
<evidence type="ECO:0000255" key="4"/>
<evidence type="ECO:0000255" key="5">
    <source>
        <dbReference type="PROSITE-ProRule" id="PRU00067"/>
    </source>
</evidence>
<evidence type="ECO:0000269" key="6">
    <source>
    </source>
</evidence>
<evidence type="ECO:0000303" key="7">
    <source>
    </source>
</evidence>
<evidence type="ECO:0000305" key="8"/>
<evidence type="ECO:0000312" key="9">
    <source>
        <dbReference type="ZFIN" id="ZDB-GENE-040426-1621"/>
    </source>
</evidence>
<proteinExistence type="evidence at transcript level"/>
<feature type="chain" id="PRO_0000442461" description="Palmitoyltransferase ZDHHC16A">
    <location>
        <begin position="1"/>
        <end position="387"/>
    </location>
</feature>
<feature type="transmembrane region" description="Helical" evidence="4">
    <location>
        <begin position="73"/>
        <end position="93"/>
    </location>
</feature>
<feature type="transmembrane region" description="Helical" evidence="4">
    <location>
        <begin position="106"/>
        <end position="126"/>
    </location>
</feature>
<feature type="transmembrane region" description="Helical" evidence="4">
    <location>
        <begin position="198"/>
        <end position="218"/>
    </location>
</feature>
<feature type="transmembrane region" description="Helical" evidence="4">
    <location>
        <begin position="236"/>
        <end position="256"/>
    </location>
</feature>
<feature type="transmembrane region" description="Helical" evidence="4">
    <location>
        <begin position="281"/>
        <end position="301"/>
    </location>
</feature>
<feature type="domain" description="DHHC" evidence="5">
    <location>
        <begin position="150"/>
        <end position="200"/>
    </location>
</feature>
<feature type="active site" description="S-palmitoyl cysteine intermediate" evidence="5">
    <location>
        <position position="180"/>
    </location>
</feature>
<feature type="sequence conflict" description="In Ref. 2; AAH55620." evidence="8" ref="2">
    <original>F</original>
    <variation>S</variation>
    <location>
        <position position="41"/>
    </location>
</feature>
<feature type="sequence conflict" description="In Ref. 2; AAH55620." evidence="8" ref="2">
    <original>T</original>
    <variation>A</variation>
    <location>
        <position position="203"/>
    </location>
</feature>
<feature type="sequence conflict" description="In Ref. 2; AAH55620." evidence="8" ref="2">
    <original>D</original>
    <variation>G</variation>
    <location>
        <position position="371"/>
    </location>
</feature>
<reference key="1">
    <citation type="journal article" date="2013" name="Nature">
        <title>The zebrafish reference genome sequence and its relationship to the human genome.</title>
        <authorList>
            <person name="Howe K."/>
            <person name="Clark M.D."/>
            <person name="Torroja C.F."/>
            <person name="Torrance J."/>
            <person name="Berthelot C."/>
            <person name="Muffato M."/>
            <person name="Collins J.E."/>
            <person name="Humphray S."/>
            <person name="McLaren K."/>
            <person name="Matthews L."/>
            <person name="McLaren S."/>
            <person name="Sealy I."/>
            <person name="Caccamo M."/>
            <person name="Churcher C."/>
            <person name="Scott C."/>
            <person name="Barrett J.C."/>
            <person name="Koch R."/>
            <person name="Rauch G.J."/>
            <person name="White S."/>
            <person name="Chow W."/>
            <person name="Kilian B."/>
            <person name="Quintais L.T."/>
            <person name="Guerra-Assuncao J.A."/>
            <person name="Zhou Y."/>
            <person name="Gu Y."/>
            <person name="Yen J."/>
            <person name="Vogel J.H."/>
            <person name="Eyre T."/>
            <person name="Redmond S."/>
            <person name="Banerjee R."/>
            <person name="Chi J."/>
            <person name="Fu B."/>
            <person name="Langley E."/>
            <person name="Maguire S.F."/>
            <person name="Laird G.K."/>
            <person name="Lloyd D."/>
            <person name="Kenyon E."/>
            <person name="Donaldson S."/>
            <person name="Sehra H."/>
            <person name="Almeida-King J."/>
            <person name="Loveland J."/>
            <person name="Trevanion S."/>
            <person name="Jones M."/>
            <person name="Quail M."/>
            <person name="Willey D."/>
            <person name="Hunt A."/>
            <person name="Burton J."/>
            <person name="Sims S."/>
            <person name="McLay K."/>
            <person name="Plumb B."/>
            <person name="Davis J."/>
            <person name="Clee C."/>
            <person name="Oliver K."/>
            <person name="Clark R."/>
            <person name="Riddle C."/>
            <person name="Elliot D."/>
            <person name="Threadgold G."/>
            <person name="Harden G."/>
            <person name="Ware D."/>
            <person name="Begum S."/>
            <person name="Mortimore B."/>
            <person name="Kerry G."/>
            <person name="Heath P."/>
            <person name="Phillimore B."/>
            <person name="Tracey A."/>
            <person name="Corby N."/>
            <person name="Dunn M."/>
            <person name="Johnson C."/>
            <person name="Wood J."/>
            <person name="Clark S."/>
            <person name="Pelan S."/>
            <person name="Griffiths G."/>
            <person name="Smith M."/>
            <person name="Glithero R."/>
            <person name="Howden P."/>
            <person name="Barker N."/>
            <person name="Lloyd C."/>
            <person name="Stevens C."/>
            <person name="Harley J."/>
            <person name="Holt K."/>
            <person name="Panagiotidis G."/>
            <person name="Lovell J."/>
            <person name="Beasley H."/>
            <person name="Henderson C."/>
            <person name="Gordon D."/>
            <person name="Auger K."/>
            <person name="Wright D."/>
            <person name="Collins J."/>
            <person name="Raisen C."/>
            <person name="Dyer L."/>
            <person name="Leung K."/>
            <person name="Robertson L."/>
            <person name="Ambridge K."/>
            <person name="Leongamornlert D."/>
            <person name="McGuire S."/>
            <person name="Gilderthorp R."/>
            <person name="Griffiths C."/>
            <person name="Manthravadi D."/>
            <person name="Nichol S."/>
            <person name="Barker G."/>
            <person name="Whitehead S."/>
            <person name="Kay M."/>
            <person name="Brown J."/>
            <person name="Murnane C."/>
            <person name="Gray E."/>
            <person name="Humphries M."/>
            <person name="Sycamore N."/>
            <person name="Barker D."/>
            <person name="Saunders D."/>
            <person name="Wallis J."/>
            <person name="Babbage A."/>
            <person name="Hammond S."/>
            <person name="Mashreghi-Mohammadi M."/>
            <person name="Barr L."/>
            <person name="Martin S."/>
            <person name="Wray P."/>
            <person name="Ellington A."/>
            <person name="Matthews N."/>
            <person name="Ellwood M."/>
            <person name="Woodmansey R."/>
            <person name="Clark G."/>
            <person name="Cooper J."/>
            <person name="Tromans A."/>
            <person name="Grafham D."/>
            <person name="Skuce C."/>
            <person name="Pandian R."/>
            <person name="Andrews R."/>
            <person name="Harrison E."/>
            <person name="Kimberley A."/>
            <person name="Garnett J."/>
            <person name="Fosker N."/>
            <person name="Hall R."/>
            <person name="Garner P."/>
            <person name="Kelly D."/>
            <person name="Bird C."/>
            <person name="Palmer S."/>
            <person name="Gehring I."/>
            <person name="Berger A."/>
            <person name="Dooley C.M."/>
            <person name="Ersan-Urun Z."/>
            <person name="Eser C."/>
            <person name="Geiger H."/>
            <person name="Geisler M."/>
            <person name="Karotki L."/>
            <person name="Kirn A."/>
            <person name="Konantz J."/>
            <person name="Konantz M."/>
            <person name="Oberlander M."/>
            <person name="Rudolph-Geiger S."/>
            <person name="Teucke M."/>
            <person name="Lanz C."/>
            <person name="Raddatz G."/>
            <person name="Osoegawa K."/>
            <person name="Zhu B."/>
            <person name="Rapp A."/>
            <person name="Widaa S."/>
            <person name="Langford C."/>
            <person name="Yang F."/>
            <person name="Schuster S.C."/>
            <person name="Carter N.P."/>
            <person name="Harrow J."/>
            <person name="Ning Z."/>
            <person name="Herrero J."/>
            <person name="Searle S.M."/>
            <person name="Enright A."/>
            <person name="Geisler R."/>
            <person name="Plasterk R.H."/>
            <person name="Lee C."/>
            <person name="Westerfield M."/>
            <person name="de Jong P.J."/>
            <person name="Zon L.I."/>
            <person name="Postlethwait J.H."/>
            <person name="Nusslein-Volhard C."/>
            <person name="Hubbard T.J."/>
            <person name="Roest Crollius H."/>
            <person name="Rogers J."/>
            <person name="Stemple D.L."/>
        </authorList>
    </citation>
    <scope>NUCLEOTIDE SEQUENCE [LARGE SCALE GENOMIC DNA]</scope>
    <source>
        <strain>Tuebingen</strain>
    </source>
</reference>
<reference key="2">
    <citation type="submission" date="2003-08" db="EMBL/GenBank/DDBJ databases">
        <authorList>
            <consortium name="NIH - Zebrafish Gene Collection (ZGC) project"/>
        </authorList>
    </citation>
    <scope>NUCLEOTIDE SEQUENCE [LARGE SCALE MRNA]</scope>
</reference>
<reference key="3">
    <citation type="journal article" date="2016" name="Dev. Neurobiol.">
        <title>ZDHHC16 modulates FGF/ERK dependent proliferation of neural stem/progenitor cells in the zebrafish telencephalon.</title>
        <authorList>
            <person name="Shi W."/>
            <person name="Chen X."/>
            <person name="Wang F."/>
            <person name="Gao M."/>
            <person name="Yang Y."/>
            <person name="Du Z."/>
            <person name="Wang C."/>
            <person name="Yao Y."/>
            <person name="He K."/>
            <person name="Hao A."/>
        </authorList>
    </citation>
    <scope>FUNCTION</scope>
    <scope>TISSUE SPECIFICITY</scope>
    <scope>DISRUPTION PHENOTYPE</scope>
</reference>
<name>ZD16A_DANRE</name>
<sequence>MHPCSSVLHLLLRCMRGCCRHTRSRVPRRLRRHVSYIRLIFKSLYFNSLTNSDVVTDSILEPVFWMVEVVTRWFGMVFVFLVVALTSSVVFIAYFCLLPLVLHTYSPGWMIWHICYGHWNLVMIVFHYYKATKTPPGYPPKMKTDVPFVSVCKKCIIPKPARSHHCGICKTCILKMDHHCPWLNNCVGHFNHRYFFSFCLFLTLGCMYCSVSGRHLFIDAYNTIDQLKHLEAEKQGVPVTGIGLLIGIVPSAGVAGKAVQVAQEVSQPPYTYKDRMFHKSVIYMWVLTSTVSVALGALTLWHALLITRGETSIERHINGKEAKRLAKRGRVYRNPFSYGKLNNWKVFFGVEKRSHWLTRVLLPSGHAPYGDGLTWDIYPLKKDMMPV</sequence>
<keyword id="KW-0012">Acyltransferase</keyword>
<keyword id="KW-0256">Endoplasmic reticulum</keyword>
<keyword id="KW-0472">Membrane</keyword>
<keyword id="KW-1185">Reference proteome</keyword>
<keyword id="KW-0808">Transferase</keyword>
<keyword id="KW-0812">Transmembrane</keyword>
<keyword id="KW-1133">Transmembrane helix</keyword>